<feature type="chain" id="PRO_1000052901" description="Large ribosomal subunit protein bL25">
    <location>
        <begin position="1"/>
        <end position="212"/>
    </location>
</feature>
<feature type="region of interest" description="Disordered" evidence="2">
    <location>
        <begin position="183"/>
        <end position="212"/>
    </location>
</feature>
<feature type="compositionally biased region" description="Acidic residues" evidence="2">
    <location>
        <begin position="201"/>
        <end position="212"/>
    </location>
</feature>
<accession>A1U373</accession>
<comment type="function">
    <text evidence="1">This is one of the proteins that binds to the 5S RNA in the ribosome where it forms part of the central protuberance.</text>
</comment>
<comment type="subunit">
    <text evidence="1">Part of the 50S ribosomal subunit; part of the 5S rRNA/L5/L18/L25 subcomplex. Contacts the 5S rRNA. Binds to the 5S rRNA independently of L5 and L18.</text>
</comment>
<comment type="similarity">
    <text evidence="1">Belongs to the bacterial ribosomal protein bL25 family. CTC subfamily.</text>
</comment>
<sequence length="212" mass="23652">MSQDFVIEAFPRDDQGKGASRRLRREERKIPAIIYGGGKDATPVAIWHNELKKAIENEAFFSHILTVDIQGKKESVILKDLQRHPYKPILTHADFLRVDKDHEIHVNVPLHFINEDTAPAVKLQGGIVSHTMTEVEVICLPQNLPEFIEVDLNEVEMDQVVHLSDLKLPKGVKVAALQQGEDHDLPVASIHKPKGAKADDAEGEEGEEGGEE</sequence>
<organism>
    <name type="scientific">Marinobacter nauticus (strain ATCC 700491 / DSM 11845 / VT8)</name>
    <name type="common">Marinobacter aquaeolei</name>
    <dbReference type="NCBI Taxonomy" id="351348"/>
    <lineage>
        <taxon>Bacteria</taxon>
        <taxon>Pseudomonadati</taxon>
        <taxon>Pseudomonadota</taxon>
        <taxon>Gammaproteobacteria</taxon>
        <taxon>Pseudomonadales</taxon>
        <taxon>Marinobacteraceae</taxon>
        <taxon>Marinobacter</taxon>
    </lineage>
</organism>
<proteinExistence type="inferred from homology"/>
<gene>
    <name evidence="1" type="primary">rplY</name>
    <name evidence="1" type="synonym">ctc</name>
    <name type="ordered locus">Maqu_2366</name>
</gene>
<dbReference type="EMBL" id="CP000514">
    <property type="protein sequence ID" value="ABM19442.1"/>
    <property type="molecule type" value="Genomic_DNA"/>
</dbReference>
<dbReference type="RefSeq" id="WP_011785829.1">
    <property type="nucleotide sequence ID" value="NC_008740.1"/>
</dbReference>
<dbReference type="SMR" id="A1U373"/>
<dbReference type="STRING" id="351348.Maqu_2366"/>
<dbReference type="KEGG" id="maq:Maqu_2366"/>
<dbReference type="eggNOG" id="COG1825">
    <property type="taxonomic scope" value="Bacteria"/>
</dbReference>
<dbReference type="HOGENOM" id="CLU_075939_0_1_6"/>
<dbReference type="OrthoDB" id="9806411at2"/>
<dbReference type="Proteomes" id="UP000000998">
    <property type="component" value="Chromosome"/>
</dbReference>
<dbReference type="GO" id="GO:0022625">
    <property type="term" value="C:cytosolic large ribosomal subunit"/>
    <property type="evidence" value="ECO:0007669"/>
    <property type="project" value="TreeGrafter"/>
</dbReference>
<dbReference type="GO" id="GO:0008097">
    <property type="term" value="F:5S rRNA binding"/>
    <property type="evidence" value="ECO:0007669"/>
    <property type="project" value="InterPro"/>
</dbReference>
<dbReference type="GO" id="GO:0003735">
    <property type="term" value="F:structural constituent of ribosome"/>
    <property type="evidence" value="ECO:0007669"/>
    <property type="project" value="InterPro"/>
</dbReference>
<dbReference type="GO" id="GO:0006412">
    <property type="term" value="P:translation"/>
    <property type="evidence" value="ECO:0007669"/>
    <property type="project" value="UniProtKB-UniRule"/>
</dbReference>
<dbReference type="CDD" id="cd00495">
    <property type="entry name" value="Ribosomal_L25_TL5_CTC"/>
    <property type="match status" value="1"/>
</dbReference>
<dbReference type="FunFam" id="2.170.120.20:FF:000003">
    <property type="entry name" value="50S ribosomal protein L25"/>
    <property type="match status" value="1"/>
</dbReference>
<dbReference type="Gene3D" id="2.170.120.20">
    <property type="entry name" value="Ribosomal protein L25, beta domain"/>
    <property type="match status" value="1"/>
</dbReference>
<dbReference type="Gene3D" id="2.40.240.10">
    <property type="entry name" value="Ribosomal Protein L25, Chain P"/>
    <property type="match status" value="1"/>
</dbReference>
<dbReference type="HAMAP" id="MF_01334">
    <property type="entry name" value="Ribosomal_bL25_CTC"/>
    <property type="match status" value="1"/>
</dbReference>
<dbReference type="InterPro" id="IPR020056">
    <property type="entry name" value="Rbsml_bL25/Gln-tRNA_synth_N"/>
</dbReference>
<dbReference type="InterPro" id="IPR011035">
    <property type="entry name" value="Ribosomal_bL25/Gln-tRNA_synth"/>
</dbReference>
<dbReference type="InterPro" id="IPR020057">
    <property type="entry name" value="Ribosomal_bL25_b-dom"/>
</dbReference>
<dbReference type="InterPro" id="IPR037121">
    <property type="entry name" value="Ribosomal_bL25_C"/>
</dbReference>
<dbReference type="InterPro" id="IPR001021">
    <property type="entry name" value="Ribosomal_bL25_long"/>
</dbReference>
<dbReference type="InterPro" id="IPR029751">
    <property type="entry name" value="Ribosomal_L25_dom"/>
</dbReference>
<dbReference type="InterPro" id="IPR020930">
    <property type="entry name" value="Ribosomal_uL5_bac-type"/>
</dbReference>
<dbReference type="NCBIfam" id="TIGR00731">
    <property type="entry name" value="bL25_bact_ctc"/>
    <property type="match status" value="1"/>
</dbReference>
<dbReference type="NCBIfam" id="NF004128">
    <property type="entry name" value="PRK05618.1-2"/>
    <property type="match status" value="1"/>
</dbReference>
<dbReference type="NCBIfam" id="NF004130">
    <property type="entry name" value="PRK05618.1-5"/>
    <property type="match status" value="1"/>
</dbReference>
<dbReference type="NCBIfam" id="NF004612">
    <property type="entry name" value="PRK05943.1"/>
    <property type="match status" value="1"/>
</dbReference>
<dbReference type="PANTHER" id="PTHR33284">
    <property type="entry name" value="RIBOSOMAL PROTEIN L25/GLN-TRNA SYNTHETASE, ANTI-CODON-BINDING DOMAIN-CONTAINING PROTEIN"/>
    <property type="match status" value="1"/>
</dbReference>
<dbReference type="PANTHER" id="PTHR33284:SF1">
    <property type="entry name" value="RIBOSOMAL PROTEIN L25_GLN-TRNA SYNTHETASE, ANTI-CODON-BINDING DOMAIN-CONTAINING PROTEIN"/>
    <property type="match status" value="1"/>
</dbReference>
<dbReference type="Pfam" id="PF01386">
    <property type="entry name" value="Ribosomal_L25p"/>
    <property type="match status" value="1"/>
</dbReference>
<dbReference type="Pfam" id="PF14693">
    <property type="entry name" value="Ribosomal_TL5_C"/>
    <property type="match status" value="1"/>
</dbReference>
<dbReference type="SUPFAM" id="SSF50715">
    <property type="entry name" value="Ribosomal protein L25-like"/>
    <property type="match status" value="1"/>
</dbReference>
<name>RL25_MARN8</name>
<evidence type="ECO:0000255" key="1">
    <source>
        <dbReference type="HAMAP-Rule" id="MF_01334"/>
    </source>
</evidence>
<evidence type="ECO:0000256" key="2">
    <source>
        <dbReference type="SAM" id="MobiDB-lite"/>
    </source>
</evidence>
<evidence type="ECO:0000305" key="3"/>
<reference key="1">
    <citation type="journal article" date="2011" name="Appl. Environ. Microbiol.">
        <title>Genomic potential of Marinobacter aquaeolei, a biogeochemical 'opportunitroph'.</title>
        <authorList>
            <person name="Singer E."/>
            <person name="Webb E.A."/>
            <person name="Nelson W.C."/>
            <person name="Heidelberg J.F."/>
            <person name="Ivanova N."/>
            <person name="Pati A."/>
            <person name="Edwards K.J."/>
        </authorList>
    </citation>
    <scope>NUCLEOTIDE SEQUENCE [LARGE SCALE GENOMIC DNA]</scope>
    <source>
        <strain>ATCC 700491 / DSM 11845 / VT8</strain>
    </source>
</reference>
<protein>
    <recommendedName>
        <fullName evidence="1">Large ribosomal subunit protein bL25</fullName>
    </recommendedName>
    <alternativeName>
        <fullName evidence="3">50S ribosomal protein L25</fullName>
    </alternativeName>
    <alternativeName>
        <fullName evidence="1">General stress protein CTC</fullName>
    </alternativeName>
</protein>
<keyword id="KW-0687">Ribonucleoprotein</keyword>
<keyword id="KW-0689">Ribosomal protein</keyword>
<keyword id="KW-0694">RNA-binding</keyword>
<keyword id="KW-0699">rRNA-binding</keyword>